<organism>
    <name type="scientific">Methanothermobacter thermautotrophicus (strain ATCC 29096 / DSM 1053 / JCM 10044 / NBRC 100330 / Delta H)</name>
    <name type="common">Methanobacterium thermoautotrophicum</name>
    <dbReference type="NCBI Taxonomy" id="187420"/>
    <lineage>
        <taxon>Archaea</taxon>
        <taxon>Methanobacteriati</taxon>
        <taxon>Methanobacteriota</taxon>
        <taxon>Methanomada group</taxon>
        <taxon>Methanobacteria</taxon>
        <taxon>Methanobacteriales</taxon>
        <taxon>Methanobacteriaceae</taxon>
        <taxon>Methanothermobacter</taxon>
    </lineage>
</organism>
<gene>
    <name type="primary">hacB</name>
    <name type="ordered locus">MTH_829</name>
</gene>
<protein>
    <recommendedName>
        <fullName>Methanogen homoaconitase small subunit</fullName>
        <shortName>HACN</shortName>
        <ecNumber evidence="2">4.2.1.114</ecNumber>
    </recommendedName>
    <alternativeName>
        <fullName>Homoaconitate hydratase</fullName>
    </alternativeName>
</protein>
<reference key="1">
    <citation type="journal article" date="1997" name="J. Bacteriol.">
        <title>Complete genome sequence of Methanobacterium thermoautotrophicum deltaH: functional analysis and comparative genomics.</title>
        <authorList>
            <person name="Smith D.R."/>
            <person name="Doucette-Stamm L.A."/>
            <person name="Deloughery C."/>
            <person name="Lee H.-M."/>
            <person name="Dubois J."/>
            <person name="Aldredge T."/>
            <person name="Bashirzadeh R."/>
            <person name="Blakely D."/>
            <person name="Cook R."/>
            <person name="Gilbert K."/>
            <person name="Harrison D."/>
            <person name="Hoang L."/>
            <person name="Keagle P."/>
            <person name="Lumm W."/>
            <person name="Pothier B."/>
            <person name="Qiu D."/>
            <person name="Spadafora R."/>
            <person name="Vicare R."/>
            <person name="Wang Y."/>
            <person name="Wierzbowski J."/>
            <person name="Gibson R."/>
            <person name="Jiwani N."/>
            <person name="Caruso A."/>
            <person name="Bush D."/>
            <person name="Safer H."/>
            <person name="Patwell D."/>
            <person name="Prabhakar S."/>
            <person name="McDougall S."/>
            <person name="Shimer G."/>
            <person name="Goyal A."/>
            <person name="Pietrovski S."/>
            <person name="Church G.M."/>
            <person name="Daniels C.J."/>
            <person name="Mao J.-I."/>
            <person name="Rice P."/>
            <person name="Noelling J."/>
            <person name="Reeve J.N."/>
        </authorList>
    </citation>
    <scope>NUCLEOTIDE SEQUENCE [LARGE SCALE GENOMIC DNA]</scope>
    <source>
        <strain>ATCC 29096 / DSM 1053 / JCM 10044 / NBRC 100330 / Delta H</strain>
    </source>
</reference>
<name>HACB_METTH</name>
<dbReference type="EC" id="4.2.1.114" evidence="2"/>
<dbReference type="EMBL" id="AE000666">
    <property type="protein sequence ID" value="AAB85327.1"/>
    <property type="molecule type" value="Genomic_DNA"/>
</dbReference>
<dbReference type="PIR" id="E69210">
    <property type="entry name" value="E69210"/>
</dbReference>
<dbReference type="RefSeq" id="WP_010876462.1">
    <property type="nucleotide sequence ID" value="NC_000916.1"/>
</dbReference>
<dbReference type="SMR" id="O26917"/>
<dbReference type="STRING" id="187420.MTH_829"/>
<dbReference type="PaxDb" id="187420-MTH_829"/>
<dbReference type="EnsemblBacteria" id="AAB85327">
    <property type="protein sequence ID" value="AAB85327"/>
    <property type="gene ID" value="MTH_829"/>
</dbReference>
<dbReference type="GeneID" id="1471237"/>
<dbReference type="GeneID" id="77401364"/>
<dbReference type="KEGG" id="mth:MTH_829"/>
<dbReference type="PATRIC" id="fig|187420.15.peg.812"/>
<dbReference type="HOGENOM" id="CLU_081378_1_1_2"/>
<dbReference type="InParanoid" id="O26917"/>
<dbReference type="UniPathway" id="UPA00919"/>
<dbReference type="Proteomes" id="UP000005223">
    <property type="component" value="Chromosome"/>
</dbReference>
<dbReference type="GO" id="GO:0004409">
    <property type="term" value="F:homoaconitate hydratase activity"/>
    <property type="evidence" value="ECO:0007669"/>
    <property type="project" value="UniProtKB-UniRule"/>
</dbReference>
<dbReference type="GO" id="GO:0019298">
    <property type="term" value="P:coenzyme B biosynthetic process"/>
    <property type="evidence" value="ECO:0007669"/>
    <property type="project" value="UniProtKB-UniRule"/>
</dbReference>
<dbReference type="CDD" id="cd01577">
    <property type="entry name" value="IPMI_Swivel"/>
    <property type="match status" value="1"/>
</dbReference>
<dbReference type="Gene3D" id="3.20.19.10">
    <property type="entry name" value="Aconitase, domain 4"/>
    <property type="match status" value="1"/>
</dbReference>
<dbReference type="HAMAP" id="MF_01032">
    <property type="entry name" value="LeuD_type2"/>
    <property type="match status" value="1"/>
</dbReference>
<dbReference type="InterPro" id="IPR015928">
    <property type="entry name" value="Aconitase/3IPM_dehydase_swvl"/>
</dbReference>
<dbReference type="InterPro" id="IPR000573">
    <property type="entry name" value="AconitaseA/IPMdHydase_ssu_swvl"/>
</dbReference>
<dbReference type="InterPro" id="IPR053582">
    <property type="entry name" value="Homoaconitase_LeuD_type2"/>
</dbReference>
<dbReference type="InterPro" id="IPR033940">
    <property type="entry name" value="IPMI_Swivel"/>
</dbReference>
<dbReference type="InterPro" id="IPR050075">
    <property type="entry name" value="LeuD"/>
</dbReference>
<dbReference type="InterPro" id="IPR011827">
    <property type="entry name" value="LeuD_type2/HacB/DmdB"/>
</dbReference>
<dbReference type="NCBIfam" id="NF040625">
    <property type="entry name" value="HacB2_Meth"/>
    <property type="match status" value="1"/>
</dbReference>
<dbReference type="NCBIfam" id="TIGR02087">
    <property type="entry name" value="LEUD_arch"/>
    <property type="match status" value="1"/>
</dbReference>
<dbReference type="PANTHER" id="PTHR43345:SF2">
    <property type="entry name" value="3-ISOPROPYLMALATE DEHYDRATASE SMALL SUBUNIT 1"/>
    <property type="match status" value="1"/>
</dbReference>
<dbReference type="PANTHER" id="PTHR43345">
    <property type="entry name" value="3-ISOPROPYLMALATE DEHYDRATASE SMALL SUBUNIT 2-RELATED-RELATED"/>
    <property type="match status" value="1"/>
</dbReference>
<dbReference type="Pfam" id="PF00694">
    <property type="entry name" value="Aconitase_C"/>
    <property type="match status" value="1"/>
</dbReference>
<dbReference type="SUPFAM" id="SSF52016">
    <property type="entry name" value="LeuD/IlvD-like"/>
    <property type="match status" value="1"/>
</dbReference>
<comment type="function">
    <text evidence="2">Component of a hydro-lyase with broad substrate specificity for cis-unsaturated tricarboxylic acids. Catalyzes both the reversible dehydration of (R)-homocitrate ((R)-2-hydroxybutane-1,2,4-tricarboxylate) to produce cis-homoaconitate ((Z)-but-1-ene-1,2,4-tricarboxylate), and its hydration to homoisocitrate ((1R,2S)-1-hydroxybutane-1,2,4-tricarboxylate). Is also able to hydrate the analogous longer chain substrates cis-homo(2)-aconitate, cis-homo(3)-aconitate. These reactions are part of the biosynthesis pathway of coenzyme B.</text>
</comment>
<comment type="catalytic activity">
    <reaction evidence="2">
        <text>(2R)-homocitrate = (2R,3S)-homoisocitrate</text>
        <dbReference type="Rhea" id="RHEA:32303"/>
        <dbReference type="ChEBI" id="CHEBI:15404"/>
        <dbReference type="ChEBI" id="CHEBI:58884"/>
        <dbReference type="EC" id="4.2.1.114"/>
    </reaction>
    <physiologicalReaction direction="left-to-right" evidence="2">
        <dbReference type="Rhea" id="RHEA:32304"/>
    </physiologicalReaction>
</comment>
<comment type="catalytic activity">
    <reaction evidence="2">
        <text>(2R)-homocitrate = cis-homoaconitate + H2O</text>
        <dbReference type="Rhea" id="RHEA:26101"/>
        <dbReference type="ChEBI" id="CHEBI:15377"/>
        <dbReference type="ChEBI" id="CHEBI:58174"/>
        <dbReference type="ChEBI" id="CHEBI:58884"/>
    </reaction>
    <physiologicalReaction direction="left-to-right" evidence="2">
        <dbReference type="Rhea" id="RHEA:26102"/>
    </physiologicalReaction>
</comment>
<comment type="catalytic activity">
    <reaction evidence="2">
        <text>(2R,3S)-homoisocitrate = cis-homoaconitate + H2O</text>
        <dbReference type="Rhea" id="RHEA:15485"/>
        <dbReference type="ChEBI" id="CHEBI:15377"/>
        <dbReference type="ChEBI" id="CHEBI:15404"/>
        <dbReference type="ChEBI" id="CHEBI:58174"/>
    </reaction>
    <physiologicalReaction direction="right-to-left" evidence="2">
        <dbReference type="Rhea" id="RHEA:15487"/>
    </physiologicalReaction>
</comment>
<comment type="catalytic activity">
    <reaction evidence="2">
        <text>cis-(homo)2aconitate + H2O = (2R,3S)-iso(homo)2citrate</text>
        <dbReference type="Rhea" id="RHEA:68416"/>
        <dbReference type="ChEBI" id="CHEBI:15377"/>
        <dbReference type="ChEBI" id="CHEBI:72710"/>
        <dbReference type="ChEBI" id="CHEBI:72722"/>
        <dbReference type="EC" id="4.2.1.114"/>
    </reaction>
    <physiologicalReaction direction="left-to-right" evidence="2">
        <dbReference type="Rhea" id="RHEA:68417"/>
    </physiologicalReaction>
</comment>
<comment type="catalytic activity">
    <reaction evidence="2">
        <text>cis-(homo)3aconitate + H2O = (2R,3S)-iso(homo)3citrate</text>
        <dbReference type="Rhea" id="RHEA:68420"/>
        <dbReference type="ChEBI" id="CHEBI:15377"/>
        <dbReference type="ChEBI" id="CHEBI:72712"/>
        <dbReference type="ChEBI" id="CHEBI:177881"/>
        <dbReference type="EC" id="4.2.1.114"/>
    </reaction>
    <physiologicalReaction direction="left-to-right" evidence="2">
        <dbReference type="Rhea" id="RHEA:68421"/>
    </physiologicalReaction>
</comment>
<comment type="pathway">
    <text evidence="2">Organic acid metabolism; 2-oxosuberate biosynthesis.</text>
</comment>
<comment type="subunit">
    <text evidence="2">Heterotetramer of 2 HacA and 2 HacB proteins.</text>
</comment>
<comment type="similarity">
    <text evidence="3">Belongs to the LeuD family. LeuD type 2 subfamily.</text>
</comment>
<comment type="caution">
    <text evidence="3">Functional assignment as methanogen HACN has been made based on the presence of the YLRT motif involved in substrate specificity as discussed in PubMed:20170198.</text>
</comment>
<feature type="chain" id="PRO_0000141942" description="Methanogen homoaconitase small subunit">
    <location>
        <begin position="1"/>
        <end position="170"/>
    </location>
</feature>
<feature type="short sequence motif" description="YLRT">
    <location>
        <begin position="26"/>
        <end position="29"/>
    </location>
</feature>
<feature type="site" description="Critical for substrate specificity" evidence="1">
    <location>
        <position position="28"/>
    </location>
</feature>
<keyword id="KW-0456">Lyase</keyword>
<keyword id="KW-1185">Reference proteome</keyword>
<sequence>MEGIIRGRVWRFGDNVDTDMIIPGRYLRTFSLDELASHVMEGARPEFASQVRKGDIIVAGRNFGCGSSREQAPVALKHAGVVAIIAESFARIFYRNAINIGLPVIMAKVDADDGDEVSIDLRSGQIRNLTAGSEYRMKPFNDYMLSILEDGGLVNHYLKTIDTGISGDEG</sequence>
<evidence type="ECO:0000250" key="1"/>
<evidence type="ECO:0000250" key="2">
    <source>
        <dbReference type="UniProtKB" id="Q58667"/>
    </source>
</evidence>
<evidence type="ECO:0000305" key="3"/>
<accession>O26917</accession>
<proteinExistence type="inferred from homology"/>